<feature type="chain" id="PRO_0000394967" description="Ret finger protein-like 4A">
    <location>
        <begin position="1"/>
        <end position="287"/>
    </location>
</feature>
<feature type="domain" description="B30.2/SPRY" evidence="2">
    <location>
        <begin position="78"/>
        <end position="278"/>
    </location>
</feature>
<feature type="zinc finger region" description="RING-type; degenerate" evidence="1">
    <location>
        <begin position="11"/>
        <end position="53"/>
    </location>
</feature>
<feature type="sequence conflict" description="In Ref. 4; AAH69834." evidence="5" ref="4">
    <original>N</original>
    <variation>S</variation>
    <location>
        <position position="184"/>
    </location>
</feature>
<proteinExistence type="evidence at protein level"/>
<keyword id="KW-0963">Cytoplasm</keyword>
<keyword id="KW-0479">Metal-binding</keyword>
<keyword id="KW-0539">Nucleus</keyword>
<keyword id="KW-1185">Reference proteome</keyword>
<keyword id="KW-0862">Zinc</keyword>
<keyword id="KW-0863">Zinc-finger</keyword>
<evidence type="ECO:0000255" key="1">
    <source>
        <dbReference type="PROSITE-ProRule" id="PRU00175"/>
    </source>
</evidence>
<evidence type="ECO:0000255" key="2">
    <source>
        <dbReference type="PROSITE-ProRule" id="PRU00548"/>
    </source>
</evidence>
<evidence type="ECO:0000269" key="3">
    <source>
    </source>
</evidence>
<evidence type="ECO:0000269" key="4">
    <source>
    </source>
</evidence>
<evidence type="ECO:0000305" key="5"/>
<gene>
    <name type="primary">Rfpl4a</name>
    <name type="synonym">Rfpl4</name>
</gene>
<comment type="subunit">
    <text evidence="4">Interacts with PSMB1, UBE2A and CCNB1.</text>
</comment>
<comment type="subcellular location">
    <subcellularLocation>
        <location evidence="4">Cytoplasm</location>
    </subcellularLocation>
    <subcellularLocation>
        <location evidence="4">Nucleus</location>
    </subcellularLocation>
</comment>
<comment type="tissue specificity">
    <text evidence="3 4">Expressed in the ovaries and oocytes (at protein level) (PubMed:11850190, PubMed:12525704). Expression restricted to gonads. In testis, present at later stages of spermatogeneis and abundant in elongating spermatids.</text>
</comment>
<comment type="developmental stage">
    <text evidence="4">Expressed in growing oocytes and early embryos.</text>
</comment>
<protein>
    <recommendedName>
        <fullName>Ret finger protein-like 4A</fullName>
    </recommendedName>
</protein>
<name>RFPLA_MOUSE</name>
<dbReference type="EMBL" id="AY070253">
    <property type="protein sequence ID" value="AAL55432.1"/>
    <property type="molecule type" value="mRNA"/>
</dbReference>
<dbReference type="EMBL" id="AK136022">
    <property type="protein sequence ID" value="BAE22777.1"/>
    <property type="molecule type" value="mRNA"/>
</dbReference>
<dbReference type="EMBL" id="CH466627">
    <property type="protein sequence ID" value="EDL31289.1"/>
    <property type="molecule type" value="Genomic_DNA"/>
</dbReference>
<dbReference type="EMBL" id="CH466627">
    <property type="protein sequence ID" value="EDL31290.1"/>
    <property type="molecule type" value="Genomic_DNA"/>
</dbReference>
<dbReference type="EMBL" id="BC069834">
    <property type="protein sequence ID" value="AAH69834.1"/>
    <property type="molecule type" value="mRNA"/>
</dbReference>
<dbReference type="CCDS" id="CCDS20759.1"/>
<dbReference type="RefSeq" id="NP_001138485.1">
    <property type="nucleotide sequence ID" value="NM_001145013.1"/>
</dbReference>
<dbReference type="RefSeq" id="NP_620404.1">
    <property type="nucleotide sequence ID" value="NM_138954.3"/>
</dbReference>
<dbReference type="SMR" id="Q8VH31"/>
<dbReference type="BioGRID" id="228699">
    <property type="interactions" value="3"/>
</dbReference>
<dbReference type="FunCoup" id="Q8VH31">
    <property type="interactions" value="759"/>
</dbReference>
<dbReference type="STRING" id="10090.ENSMUSP00000039519"/>
<dbReference type="REPRODUCTION-2DPAGE" id="Q8VH31"/>
<dbReference type="PaxDb" id="10090-ENSMUSP00000039519"/>
<dbReference type="DNASU" id="192658"/>
<dbReference type="Ensembl" id="ENSMUST00000045215.9">
    <property type="protein sequence ID" value="ENSMUSP00000039519.8"/>
    <property type="gene ID" value="ENSMUSG00000035191.16"/>
</dbReference>
<dbReference type="Ensembl" id="ENSMUST00000179971.8">
    <property type="protein sequence ID" value="ENSMUSP00000136497.2"/>
    <property type="gene ID" value="ENSMUSG00000035191.16"/>
</dbReference>
<dbReference type="GeneID" id="192658"/>
<dbReference type="KEGG" id="mmu:192658"/>
<dbReference type="UCSC" id="uc009faa.2">
    <property type="organism name" value="mouse"/>
</dbReference>
<dbReference type="AGR" id="MGI:2149590"/>
<dbReference type="CTD" id="192658"/>
<dbReference type="MGI" id="MGI:2149590">
    <property type="gene designation" value="Rfpl4"/>
</dbReference>
<dbReference type="VEuPathDB" id="HostDB:ENSMUSG00000035191"/>
<dbReference type="eggNOG" id="KOG2177">
    <property type="taxonomic scope" value="Eukaryota"/>
</dbReference>
<dbReference type="GeneTree" id="ENSGT00940000163220"/>
<dbReference type="HOGENOM" id="CLU_013137_7_1_1"/>
<dbReference type="InParanoid" id="Q8VH31"/>
<dbReference type="OMA" id="RCGYSKQ"/>
<dbReference type="OrthoDB" id="6105938at2759"/>
<dbReference type="PhylomeDB" id="Q8VH31"/>
<dbReference type="TreeFam" id="TF317532"/>
<dbReference type="BioGRID-ORCS" id="192658">
    <property type="hits" value="0 hits in 76 CRISPR screens"/>
</dbReference>
<dbReference type="ChiTaRS" id="Rfpl4">
    <property type="organism name" value="mouse"/>
</dbReference>
<dbReference type="PRO" id="PR:Q8VH31"/>
<dbReference type="Proteomes" id="UP000000589">
    <property type="component" value="Chromosome 7"/>
</dbReference>
<dbReference type="RNAct" id="Q8VH31">
    <property type="molecule type" value="protein"/>
</dbReference>
<dbReference type="Bgee" id="ENSMUSG00000035191">
    <property type="expression patterns" value="Expressed in animal zygote and 12 other cell types or tissues"/>
</dbReference>
<dbReference type="ExpressionAtlas" id="Q8VH31">
    <property type="expression patterns" value="baseline and differential"/>
</dbReference>
<dbReference type="GO" id="GO:0005737">
    <property type="term" value="C:cytoplasm"/>
    <property type="evidence" value="ECO:0000314"/>
    <property type="project" value="MGI"/>
</dbReference>
<dbReference type="GO" id="GO:0001674">
    <property type="term" value="C:female germ cell nucleus"/>
    <property type="evidence" value="ECO:0000314"/>
    <property type="project" value="MGI"/>
</dbReference>
<dbReference type="GO" id="GO:0008270">
    <property type="term" value="F:zinc ion binding"/>
    <property type="evidence" value="ECO:0007669"/>
    <property type="project" value="UniProtKB-KW"/>
</dbReference>
<dbReference type="CDD" id="cd15821">
    <property type="entry name" value="SPRY_PRY_RFPL"/>
    <property type="match status" value="1"/>
</dbReference>
<dbReference type="FunFam" id="2.60.120.920:FF:000040">
    <property type="entry name" value="Ret finger protein-like 4A"/>
    <property type="match status" value="1"/>
</dbReference>
<dbReference type="Gene3D" id="2.60.120.920">
    <property type="match status" value="1"/>
</dbReference>
<dbReference type="Gene3D" id="3.30.40.10">
    <property type="entry name" value="Zinc/RING finger domain, C3HC4 (zinc finger)"/>
    <property type="match status" value="1"/>
</dbReference>
<dbReference type="InterPro" id="IPR001870">
    <property type="entry name" value="B30.2/SPRY"/>
</dbReference>
<dbReference type="InterPro" id="IPR043136">
    <property type="entry name" value="B30.2/SPRY_sf"/>
</dbReference>
<dbReference type="InterPro" id="IPR003879">
    <property type="entry name" value="Butyrophylin_SPRY"/>
</dbReference>
<dbReference type="InterPro" id="IPR013320">
    <property type="entry name" value="ConA-like_dom_sf"/>
</dbReference>
<dbReference type="InterPro" id="IPR006574">
    <property type="entry name" value="PRY"/>
</dbReference>
<dbReference type="InterPro" id="IPR022723">
    <property type="entry name" value="RDM_domain_RFPL"/>
</dbReference>
<dbReference type="InterPro" id="IPR037960">
    <property type="entry name" value="SPRY/PRY_RFPL"/>
</dbReference>
<dbReference type="InterPro" id="IPR003877">
    <property type="entry name" value="SPRY_dom"/>
</dbReference>
<dbReference type="InterPro" id="IPR050143">
    <property type="entry name" value="TRIM/RBCC"/>
</dbReference>
<dbReference type="InterPro" id="IPR001841">
    <property type="entry name" value="Znf_RING"/>
</dbReference>
<dbReference type="InterPro" id="IPR013083">
    <property type="entry name" value="Znf_RING/FYVE/PHD"/>
</dbReference>
<dbReference type="PANTHER" id="PTHR24103">
    <property type="entry name" value="E3 UBIQUITIN-PROTEIN LIGASE TRIM"/>
    <property type="match status" value="1"/>
</dbReference>
<dbReference type="Pfam" id="PF13765">
    <property type="entry name" value="PRY"/>
    <property type="match status" value="1"/>
</dbReference>
<dbReference type="Pfam" id="PF11002">
    <property type="entry name" value="RDM"/>
    <property type="match status" value="1"/>
</dbReference>
<dbReference type="Pfam" id="PF00622">
    <property type="entry name" value="SPRY"/>
    <property type="match status" value="1"/>
</dbReference>
<dbReference type="Pfam" id="PF15227">
    <property type="entry name" value="zf-C3HC4_4"/>
    <property type="match status" value="1"/>
</dbReference>
<dbReference type="PRINTS" id="PR01407">
    <property type="entry name" value="BUTYPHLNCDUF"/>
</dbReference>
<dbReference type="SMART" id="SM00589">
    <property type="entry name" value="PRY"/>
    <property type="match status" value="1"/>
</dbReference>
<dbReference type="SMART" id="SM00184">
    <property type="entry name" value="RING"/>
    <property type="match status" value="1"/>
</dbReference>
<dbReference type="SMART" id="SM00449">
    <property type="entry name" value="SPRY"/>
    <property type="match status" value="1"/>
</dbReference>
<dbReference type="SUPFAM" id="SSF49899">
    <property type="entry name" value="Concanavalin A-like lectins/glucanases"/>
    <property type="match status" value="1"/>
</dbReference>
<dbReference type="SUPFAM" id="SSF57850">
    <property type="entry name" value="RING/U-box"/>
    <property type="match status" value="1"/>
</dbReference>
<dbReference type="PROSITE" id="PS50188">
    <property type="entry name" value="B302_SPRY"/>
    <property type="match status" value="1"/>
</dbReference>
<dbReference type="PROSITE" id="PS50089">
    <property type="entry name" value="ZF_RING_2"/>
    <property type="match status" value="1"/>
</dbReference>
<organism>
    <name type="scientific">Mus musculus</name>
    <name type="common">Mouse</name>
    <dbReference type="NCBI Taxonomy" id="10090"/>
    <lineage>
        <taxon>Eukaryota</taxon>
        <taxon>Metazoa</taxon>
        <taxon>Chordata</taxon>
        <taxon>Craniata</taxon>
        <taxon>Vertebrata</taxon>
        <taxon>Euteleostomi</taxon>
        <taxon>Mammalia</taxon>
        <taxon>Eutheria</taxon>
        <taxon>Euarchontoglires</taxon>
        <taxon>Glires</taxon>
        <taxon>Rodentia</taxon>
        <taxon>Myomorpha</taxon>
        <taxon>Muroidea</taxon>
        <taxon>Muridae</taxon>
        <taxon>Murinae</taxon>
        <taxon>Mus</taxon>
        <taxon>Mus</taxon>
    </lineage>
</organism>
<reference key="1">
    <citation type="journal article" date="2002" name="Mech. Dev.">
        <title>The ret finger protein-like 4 gene, Rfpl4, encodes a putative E3 ubiquitin-protein ligase expressed in adult germ cells.</title>
        <authorList>
            <person name="Rajkovic A."/>
            <person name="Lee J.H."/>
            <person name="Yan C."/>
            <person name="Matzuk M.M."/>
        </authorList>
    </citation>
    <scope>NUCLEOTIDE SEQUENCE [MRNA]</scope>
    <scope>TISSUE SPECIFICITY</scope>
    <source>
        <strain>C57BL/6J</strain>
    </source>
</reference>
<reference key="2">
    <citation type="journal article" date="2005" name="Science">
        <title>The transcriptional landscape of the mammalian genome.</title>
        <authorList>
            <person name="Carninci P."/>
            <person name="Kasukawa T."/>
            <person name="Katayama S."/>
            <person name="Gough J."/>
            <person name="Frith M.C."/>
            <person name="Maeda N."/>
            <person name="Oyama R."/>
            <person name="Ravasi T."/>
            <person name="Lenhard B."/>
            <person name="Wells C."/>
            <person name="Kodzius R."/>
            <person name="Shimokawa K."/>
            <person name="Bajic V.B."/>
            <person name="Brenner S.E."/>
            <person name="Batalov S."/>
            <person name="Forrest A.R."/>
            <person name="Zavolan M."/>
            <person name="Davis M.J."/>
            <person name="Wilming L.G."/>
            <person name="Aidinis V."/>
            <person name="Allen J.E."/>
            <person name="Ambesi-Impiombato A."/>
            <person name="Apweiler R."/>
            <person name="Aturaliya R.N."/>
            <person name="Bailey T.L."/>
            <person name="Bansal M."/>
            <person name="Baxter L."/>
            <person name="Beisel K.W."/>
            <person name="Bersano T."/>
            <person name="Bono H."/>
            <person name="Chalk A.M."/>
            <person name="Chiu K.P."/>
            <person name="Choudhary V."/>
            <person name="Christoffels A."/>
            <person name="Clutterbuck D.R."/>
            <person name="Crowe M.L."/>
            <person name="Dalla E."/>
            <person name="Dalrymple B.P."/>
            <person name="de Bono B."/>
            <person name="Della Gatta G."/>
            <person name="di Bernardo D."/>
            <person name="Down T."/>
            <person name="Engstrom P."/>
            <person name="Fagiolini M."/>
            <person name="Faulkner G."/>
            <person name="Fletcher C.F."/>
            <person name="Fukushima T."/>
            <person name="Furuno M."/>
            <person name="Futaki S."/>
            <person name="Gariboldi M."/>
            <person name="Georgii-Hemming P."/>
            <person name="Gingeras T.R."/>
            <person name="Gojobori T."/>
            <person name="Green R.E."/>
            <person name="Gustincich S."/>
            <person name="Harbers M."/>
            <person name="Hayashi Y."/>
            <person name="Hensch T.K."/>
            <person name="Hirokawa N."/>
            <person name="Hill D."/>
            <person name="Huminiecki L."/>
            <person name="Iacono M."/>
            <person name="Ikeo K."/>
            <person name="Iwama A."/>
            <person name="Ishikawa T."/>
            <person name="Jakt M."/>
            <person name="Kanapin A."/>
            <person name="Katoh M."/>
            <person name="Kawasawa Y."/>
            <person name="Kelso J."/>
            <person name="Kitamura H."/>
            <person name="Kitano H."/>
            <person name="Kollias G."/>
            <person name="Krishnan S.P."/>
            <person name="Kruger A."/>
            <person name="Kummerfeld S.K."/>
            <person name="Kurochkin I.V."/>
            <person name="Lareau L.F."/>
            <person name="Lazarevic D."/>
            <person name="Lipovich L."/>
            <person name="Liu J."/>
            <person name="Liuni S."/>
            <person name="McWilliam S."/>
            <person name="Madan Babu M."/>
            <person name="Madera M."/>
            <person name="Marchionni L."/>
            <person name="Matsuda H."/>
            <person name="Matsuzawa S."/>
            <person name="Miki H."/>
            <person name="Mignone F."/>
            <person name="Miyake S."/>
            <person name="Morris K."/>
            <person name="Mottagui-Tabar S."/>
            <person name="Mulder N."/>
            <person name="Nakano N."/>
            <person name="Nakauchi H."/>
            <person name="Ng P."/>
            <person name="Nilsson R."/>
            <person name="Nishiguchi S."/>
            <person name="Nishikawa S."/>
            <person name="Nori F."/>
            <person name="Ohara O."/>
            <person name="Okazaki Y."/>
            <person name="Orlando V."/>
            <person name="Pang K.C."/>
            <person name="Pavan W.J."/>
            <person name="Pavesi G."/>
            <person name="Pesole G."/>
            <person name="Petrovsky N."/>
            <person name="Piazza S."/>
            <person name="Reed J."/>
            <person name="Reid J.F."/>
            <person name="Ring B.Z."/>
            <person name="Ringwald M."/>
            <person name="Rost B."/>
            <person name="Ruan Y."/>
            <person name="Salzberg S.L."/>
            <person name="Sandelin A."/>
            <person name="Schneider C."/>
            <person name="Schoenbach C."/>
            <person name="Sekiguchi K."/>
            <person name="Semple C.A."/>
            <person name="Seno S."/>
            <person name="Sessa L."/>
            <person name="Sheng Y."/>
            <person name="Shibata Y."/>
            <person name="Shimada H."/>
            <person name="Shimada K."/>
            <person name="Silva D."/>
            <person name="Sinclair B."/>
            <person name="Sperling S."/>
            <person name="Stupka E."/>
            <person name="Sugiura K."/>
            <person name="Sultana R."/>
            <person name="Takenaka Y."/>
            <person name="Taki K."/>
            <person name="Tammoja K."/>
            <person name="Tan S.L."/>
            <person name="Tang S."/>
            <person name="Taylor M.S."/>
            <person name="Tegner J."/>
            <person name="Teichmann S.A."/>
            <person name="Ueda H.R."/>
            <person name="van Nimwegen E."/>
            <person name="Verardo R."/>
            <person name="Wei C.L."/>
            <person name="Yagi K."/>
            <person name="Yamanishi H."/>
            <person name="Zabarovsky E."/>
            <person name="Zhu S."/>
            <person name="Zimmer A."/>
            <person name="Hide W."/>
            <person name="Bult C."/>
            <person name="Grimmond S.M."/>
            <person name="Teasdale R.D."/>
            <person name="Liu E.T."/>
            <person name="Brusic V."/>
            <person name="Quackenbush J."/>
            <person name="Wahlestedt C."/>
            <person name="Mattick J.S."/>
            <person name="Hume D.A."/>
            <person name="Kai C."/>
            <person name="Sasaki D."/>
            <person name="Tomaru Y."/>
            <person name="Fukuda S."/>
            <person name="Kanamori-Katayama M."/>
            <person name="Suzuki M."/>
            <person name="Aoki J."/>
            <person name="Arakawa T."/>
            <person name="Iida J."/>
            <person name="Imamura K."/>
            <person name="Itoh M."/>
            <person name="Kato T."/>
            <person name="Kawaji H."/>
            <person name="Kawagashira N."/>
            <person name="Kawashima T."/>
            <person name="Kojima M."/>
            <person name="Kondo S."/>
            <person name="Konno H."/>
            <person name="Nakano K."/>
            <person name="Ninomiya N."/>
            <person name="Nishio T."/>
            <person name="Okada M."/>
            <person name="Plessy C."/>
            <person name="Shibata K."/>
            <person name="Shiraki T."/>
            <person name="Suzuki S."/>
            <person name="Tagami M."/>
            <person name="Waki K."/>
            <person name="Watahiki A."/>
            <person name="Okamura-Oho Y."/>
            <person name="Suzuki H."/>
            <person name="Kawai J."/>
            <person name="Hayashizaki Y."/>
        </authorList>
    </citation>
    <scope>NUCLEOTIDE SEQUENCE [LARGE SCALE MRNA]</scope>
    <source>
        <strain>C57BL/6J</strain>
        <tissue>Embryo</tissue>
    </source>
</reference>
<reference key="3">
    <citation type="submission" date="2005-07" db="EMBL/GenBank/DDBJ databases">
        <authorList>
            <person name="Mural R.J."/>
            <person name="Adams M.D."/>
            <person name="Myers E.W."/>
            <person name="Smith H.O."/>
            <person name="Venter J.C."/>
        </authorList>
    </citation>
    <scope>NUCLEOTIDE SEQUENCE [LARGE SCALE GENOMIC DNA]</scope>
</reference>
<reference key="4">
    <citation type="journal article" date="2004" name="Genome Res.">
        <title>The status, quality, and expansion of the NIH full-length cDNA project: the Mammalian Gene Collection (MGC).</title>
        <authorList>
            <consortium name="The MGC Project Team"/>
        </authorList>
    </citation>
    <scope>NUCLEOTIDE SEQUENCE [LARGE SCALE MRNA]</scope>
    <source>
        <strain>C57BL/6J</strain>
        <tissue>Oocyte</tissue>
    </source>
</reference>
<reference key="5">
    <citation type="journal article" date="2003" name="Proc. Natl. Acad. Sci. U.S.A.">
        <title>RFPL4 interacts with oocyte proteins of the ubiquitin-proteasome degradation pathway.</title>
        <authorList>
            <person name="Suzumori N."/>
            <person name="Burns K.H."/>
            <person name="Yan W."/>
            <person name="Matzuk M.M."/>
        </authorList>
    </citation>
    <scope>INTERACTION WITH PSMB1; UBE2A AND CCNB1</scope>
    <scope>SUBCELLULAR LOCATION</scope>
    <scope>TISSUE SPECIFICITY</scope>
    <scope>DEVELOPMENTAL STAGE</scope>
</reference>
<accession>Q8VH31</accession>
<accession>Q6IS67</accession>
<sequence length="287" mass="32358">MAHLFKEKSNCYFCFRCLESPVYLNCGYICCLKCLDSLEKSPEGDGVLCPTCSVVSLKEDIIHAKQLGALVTKIKNLEPQLNFILTMDQGMKIFQVTMTLDVDTAQNHLIISDDLLSVYYTPQKQARKKCAERFHPSPCVLGSSRFTSGRHYWEVVVGTSKEWDIGICKESINRKKAIHLSEKNGFWTVGVRAKKVYSASTDPLTVLRVNPRLRRVGIFLDMLEKSVSFWDLSDGSHIYTFLEIPDTDPFRPFFSPASSYPDGDQEQVLSICPVTNPGIFGIPVNPQ</sequence>